<comment type="function">
    <text evidence="1">Ion channel inhibitor.</text>
</comment>
<comment type="subcellular location">
    <subcellularLocation>
        <location evidence="1">Secreted</location>
    </subcellularLocation>
</comment>
<comment type="tissue specificity">
    <text>Expressed by the venom gland.</text>
</comment>
<comment type="domain">
    <text evidence="1">The presence of a 'disulfide through disulfide knot' structurally defines this protein as a knottin.</text>
</comment>
<comment type="similarity">
    <text evidence="4">Belongs to the neurotoxin 10 (Hwtx-1) family. 12 (Hntx-12) subfamily.</text>
</comment>
<organism>
    <name type="scientific">Cyriopagopus hainanus</name>
    <name type="common">Chinese bird spider</name>
    <name type="synonym">Haplopelma hainanum</name>
    <dbReference type="NCBI Taxonomy" id="209901"/>
    <lineage>
        <taxon>Eukaryota</taxon>
        <taxon>Metazoa</taxon>
        <taxon>Ecdysozoa</taxon>
        <taxon>Arthropoda</taxon>
        <taxon>Chelicerata</taxon>
        <taxon>Arachnida</taxon>
        <taxon>Araneae</taxon>
        <taxon>Mygalomorphae</taxon>
        <taxon>Theraphosidae</taxon>
        <taxon>Haplopelma</taxon>
    </lineage>
</organism>
<proteinExistence type="evidence at transcript level"/>
<accession>D2Y2C1</accession>
<reference key="1">
    <citation type="journal article" date="2010" name="J. Proteome Res.">
        <title>Molecular diversification of peptide toxins from the tarantula Haplopelma hainanum (Ornithoctonus hainana) venom based on transcriptomic, peptidomic, and genomic analyses.</title>
        <authorList>
            <person name="Tang X."/>
            <person name="Zhang Y."/>
            <person name="Hu W."/>
            <person name="Xu D."/>
            <person name="Tao H."/>
            <person name="Yang X."/>
            <person name="Li Y."/>
            <person name="Jiang L."/>
            <person name="Liang S."/>
        </authorList>
    </citation>
    <scope>NUCLEOTIDE SEQUENCE [LARGE SCALE MRNA]</scope>
    <source>
        <tissue>Venom gland</tissue>
    </source>
</reference>
<feature type="signal peptide" evidence="2">
    <location>
        <begin position="1"/>
        <end position="33"/>
    </location>
</feature>
<feature type="propeptide" id="PRO_0000400671" evidence="1">
    <location>
        <begin position="34"/>
        <end position="61"/>
    </location>
</feature>
<feature type="peptide" id="PRO_0000400672" description="U6-theraphotoxin-Hhn1a 1">
    <location>
        <begin position="62"/>
        <end position="97"/>
    </location>
</feature>
<feature type="disulfide bond" evidence="1">
    <location>
        <begin position="63"/>
        <end position="77"/>
    </location>
</feature>
<feature type="disulfide bond" evidence="1">
    <location>
        <begin position="70"/>
        <end position="82"/>
    </location>
</feature>
<feature type="disulfide bond" evidence="1">
    <location>
        <begin position="76"/>
        <end position="89"/>
    </location>
</feature>
<protein>
    <recommendedName>
        <fullName>U6-theraphotoxin-Hhn1a 1</fullName>
        <shortName>U6-TRTX-Hhn1a</shortName>
    </recommendedName>
    <alternativeName>
        <fullName evidence="3">Hainantoxin-XII</fullName>
        <shortName evidence="3">HNTX-XII</shortName>
    </alternativeName>
</protein>
<keyword id="KW-1015">Disulfide bond</keyword>
<keyword id="KW-0872">Ion channel impairing toxin</keyword>
<keyword id="KW-0960">Knottin</keyword>
<keyword id="KW-0964">Secreted</keyword>
<keyword id="KW-0732">Signal</keyword>
<keyword id="KW-0800">Toxin</keyword>
<evidence type="ECO:0000250" key="1"/>
<evidence type="ECO:0000255" key="2"/>
<evidence type="ECO:0000303" key="3">
    <source>
    </source>
</evidence>
<evidence type="ECO:0000305" key="4"/>
<dbReference type="EMBL" id="GU292998">
    <property type="protein sequence ID" value="ADB56814.1"/>
    <property type="molecule type" value="mRNA"/>
</dbReference>
<dbReference type="SMR" id="D2Y2C1"/>
<dbReference type="ArachnoServer" id="AS001585">
    <property type="toxin name" value="U6-theraphotoxin-Hhn1a"/>
</dbReference>
<dbReference type="GO" id="GO:0005576">
    <property type="term" value="C:extracellular region"/>
    <property type="evidence" value="ECO:0007669"/>
    <property type="project" value="UniProtKB-SubCell"/>
</dbReference>
<dbReference type="GO" id="GO:0008200">
    <property type="term" value="F:ion channel inhibitor activity"/>
    <property type="evidence" value="ECO:0007669"/>
    <property type="project" value="InterPro"/>
</dbReference>
<dbReference type="GO" id="GO:0090729">
    <property type="term" value="F:toxin activity"/>
    <property type="evidence" value="ECO:0007669"/>
    <property type="project" value="UniProtKB-KW"/>
</dbReference>
<dbReference type="InterPro" id="IPR011696">
    <property type="entry name" value="Huwentoxin-1"/>
</dbReference>
<dbReference type="InterPro" id="IPR013140">
    <property type="entry name" value="Huwentoxin_CS1"/>
</dbReference>
<dbReference type="Pfam" id="PF07740">
    <property type="entry name" value="Toxin_12"/>
    <property type="match status" value="1"/>
</dbReference>
<dbReference type="SUPFAM" id="SSF57059">
    <property type="entry name" value="omega toxin-like"/>
    <property type="match status" value="1"/>
</dbReference>
<dbReference type="PROSITE" id="PS60021">
    <property type="entry name" value="HWTX_1"/>
    <property type="match status" value="1"/>
</dbReference>
<sequence>MLIKQFSRRSKNMKVQILLAFAALFVLAVGSYASESKKLDLRDALFSAMFSADYQLNPQERGCRYFLGECKKTSECCEHLACHDKHKWCAWDWTIGK</sequence>
<name>H12A1_CYRHA</name>